<comment type="function">
    <text evidence="1">Poorly processive, error-prone DNA polymerase involved in untargeted mutagenesis. Copies undamaged DNA at stalled replication forks, which arise in vivo from mismatched or misaligned primer ends. These misaligned primers can be extended by PolIV. Exhibits no 3'-5' exonuclease (proofreading) activity. May be involved in translesional synthesis, in conjunction with the beta clamp from PolIII.</text>
</comment>
<comment type="catalytic activity">
    <reaction evidence="1">
        <text>DNA(n) + a 2'-deoxyribonucleoside 5'-triphosphate = DNA(n+1) + diphosphate</text>
        <dbReference type="Rhea" id="RHEA:22508"/>
        <dbReference type="Rhea" id="RHEA-COMP:17339"/>
        <dbReference type="Rhea" id="RHEA-COMP:17340"/>
        <dbReference type="ChEBI" id="CHEBI:33019"/>
        <dbReference type="ChEBI" id="CHEBI:61560"/>
        <dbReference type="ChEBI" id="CHEBI:173112"/>
        <dbReference type="EC" id="2.7.7.7"/>
    </reaction>
</comment>
<comment type="cofactor">
    <cofactor evidence="1">
        <name>Mg(2+)</name>
        <dbReference type="ChEBI" id="CHEBI:18420"/>
    </cofactor>
    <text evidence="1">Binds 2 magnesium ions per subunit.</text>
</comment>
<comment type="subunit">
    <text evidence="1">Monomer.</text>
</comment>
<comment type="subcellular location">
    <subcellularLocation>
        <location evidence="1">Cytoplasm</location>
    </subcellularLocation>
</comment>
<comment type="similarity">
    <text evidence="1">Belongs to the DNA polymerase type-Y family.</text>
</comment>
<comment type="sequence caution" evidence="2">
    <conflict type="erroneous initiation">
        <sequence resource="EMBL-CDS" id="AAF30849"/>
    </conflict>
</comment>
<accession>Q9PQ53</accession>
<keyword id="KW-0963">Cytoplasm</keyword>
<keyword id="KW-0227">DNA damage</keyword>
<keyword id="KW-0234">DNA repair</keyword>
<keyword id="KW-0235">DNA replication</keyword>
<keyword id="KW-0238">DNA-binding</keyword>
<keyword id="KW-0239">DNA-directed DNA polymerase</keyword>
<keyword id="KW-0460">Magnesium</keyword>
<keyword id="KW-0479">Metal-binding</keyword>
<keyword id="KW-0515">Mutator protein</keyword>
<keyword id="KW-0548">Nucleotidyltransferase</keyword>
<keyword id="KW-1185">Reference proteome</keyword>
<keyword id="KW-0808">Transferase</keyword>
<protein>
    <recommendedName>
        <fullName evidence="1">DNA polymerase IV</fullName>
        <shortName evidence="1">Pol IV</shortName>
        <ecNumber evidence="1">2.7.7.7</ecNumber>
    </recommendedName>
</protein>
<sequence>MKNNHQKIIMHLDIDAFYATVSELLHPEYKNFPIAVGSLNSRTGIISSPNYLARSYGVKAAMPIFLAKELCPNLIILPSEHNIYQSYSKHFFQIINKYTNKIEITSIDECFIDATDLVKKYHNNIRLLATKIQKEIKNKLNLSISIGISYNKTIAKMATELNKPSGISIIDENKIINLIYELNINKIPYIGEIKSQELYAINIFKIKELIATENKQKISLVLGSIYQNLVNDLKGLSKIKIIDEDIYKTISHSKTFNEDLNDFYEISNEMNDLILTVTNRLKKCNLMTNNISIYIKYPSFKTKIKQKQLTYYTDDYQTIFLAIKNLFKIMYKDETIRLIGISLNKLVKKENVKKQLFLFD</sequence>
<evidence type="ECO:0000255" key="1">
    <source>
        <dbReference type="HAMAP-Rule" id="MF_01113"/>
    </source>
</evidence>
<evidence type="ECO:0000305" key="2"/>
<proteinExistence type="inferred from homology"/>
<name>DPO4_UREPA</name>
<reference key="1">
    <citation type="journal article" date="2000" name="Nature">
        <title>The complete sequence of the mucosal pathogen Ureaplasma urealyticum.</title>
        <authorList>
            <person name="Glass J.I."/>
            <person name="Lefkowitz E.J."/>
            <person name="Glass J.S."/>
            <person name="Heiner C.R."/>
            <person name="Chen E.Y."/>
            <person name="Cassell G.H."/>
        </authorList>
    </citation>
    <scope>NUCLEOTIDE SEQUENCE [LARGE SCALE GENOMIC DNA]</scope>
    <source>
        <strain>ATCC 700970</strain>
    </source>
</reference>
<organism>
    <name type="scientific">Ureaplasma parvum serovar 3 (strain ATCC 700970)</name>
    <dbReference type="NCBI Taxonomy" id="273119"/>
    <lineage>
        <taxon>Bacteria</taxon>
        <taxon>Bacillati</taxon>
        <taxon>Mycoplasmatota</taxon>
        <taxon>Mycoplasmoidales</taxon>
        <taxon>Mycoplasmoidaceae</taxon>
        <taxon>Ureaplasma</taxon>
    </lineage>
</organism>
<feature type="chain" id="PRO_0000173961" description="DNA polymerase IV">
    <location>
        <begin position="1"/>
        <end position="360"/>
    </location>
</feature>
<feature type="domain" description="UmuC" evidence="1">
    <location>
        <begin position="9"/>
        <end position="191"/>
    </location>
</feature>
<feature type="active site" evidence="1">
    <location>
        <position position="109"/>
    </location>
</feature>
<feature type="binding site" evidence="1">
    <location>
        <position position="13"/>
    </location>
    <ligand>
        <name>Mg(2+)</name>
        <dbReference type="ChEBI" id="CHEBI:18420"/>
    </ligand>
</feature>
<feature type="binding site" evidence="1">
    <location>
        <position position="108"/>
    </location>
    <ligand>
        <name>Mg(2+)</name>
        <dbReference type="ChEBI" id="CHEBI:18420"/>
    </ligand>
</feature>
<feature type="site" description="Substrate discrimination" evidence="1">
    <location>
        <position position="18"/>
    </location>
</feature>
<gene>
    <name evidence="1" type="primary">dinB</name>
    <name type="ordered locus">UU437</name>
</gene>
<dbReference type="EC" id="2.7.7.7" evidence="1"/>
<dbReference type="EMBL" id="AF222894">
    <property type="protein sequence ID" value="AAF30849.1"/>
    <property type="status" value="ALT_INIT"/>
    <property type="molecule type" value="Genomic_DNA"/>
</dbReference>
<dbReference type="PIR" id="D82891">
    <property type="entry name" value="D82891"/>
</dbReference>
<dbReference type="RefSeq" id="WP_006689004.1">
    <property type="nucleotide sequence ID" value="NC_002162.1"/>
</dbReference>
<dbReference type="SMR" id="Q9PQ53"/>
<dbReference type="STRING" id="273119.UU437"/>
<dbReference type="EnsemblBacteria" id="AAF30849">
    <property type="protein sequence ID" value="AAF30849"/>
    <property type="gene ID" value="UU437"/>
</dbReference>
<dbReference type="GeneID" id="29672432"/>
<dbReference type="KEGG" id="uur:UU437"/>
<dbReference type="eggNOG" id="COG0389">
    <property type="taxonomic scope" value="Bacteria"/>
</dbReference>
<dbReference type="HOGENOM" id="CLU_012348_1_1_14"/>
<dbReference type="OrthoDB" id="9808813at2"/>
<dbReference type="Proteomes" id="UP000000423">
    <property type="component" value="Chromosome"/>
</dbReference>
<dbReference type="GO" id="GO:0005829">
    <property type="term" value="C:cytosol"/>
    <property type="evidence" value="ECO:0007669"/>
    <property type="project" value="TreeGrafter"/>
</dbReference>
<dbReference type="GO" id="GO:0003684">
    <property type="term" value="F:damaged DNA binding"/>
    <property type="evidence" value="ECO:0007669"/>
    <property type="project" value="InterPro"/>
</dbReference>
<dbReference type="GO" id="GO:0003887">
    <property type="term" value="F:DNA-directed DNA polymerase activity"/>
    <property type="evidence" value="ECO:0007669"/>
    <property type="project" value="UniProtKB-UniRule"/>
</dbReference>
<dbReference type="GO" id="GO:0000287">
    <property type="term" value="F:magnesium ion binding"/>
    <property type="evidence" value="ECO:0007669"/>
    <property type="project" value="UniProtKB-UniRule"/>
</dbReference>
<dbReference type="GO" id="GO:0006261">
    <property type="term" value="P:DNA-templated DNA replication"/>
    <property type="evidence" value="ECO:0007669"/>
    <property type="project" value="UniProtKB-UniRule"/>
</dbReference>
<dbReference type="GO" id="GO:0042276">
    <property type="term" value="P:error-prone translesion synthesis"/>
    <property type="evidence" value="ECO:0007669"/>
    <property type="project" value="TreeGrafter"/>
</dbReference>
<dbReference type="GO" id="GO:0009432">
    <property type="term" value="P:SOS response"/>
    <property type="evidence" value="ECO:0007669"/>
    <property type="project" value="TreeGrafter"/>
</dbReference>
<dbReference type="CDD" id="cd03586">
    <property type="entry name" value="PolY_Pol_IV_kappa"/>
    <property type="match status" value="1"/>
</dbReference>
<dbReference type="Gene3D" id="3.30.70.270">
    <property type="match status" value="1"/>
</dbReference>
<dbReference type="Gene3D" id="3.40.1170.60">
    <property type="match status" value="1"/>
</dbReference>
<dbReference type="Gene3D" id="3.30.1490.100">
    <property type="entry name" value="DNA polymerase, Y-family, little finger domain"/>
    <property type="match status" value="1"/>
</dbReference>
<dbReference type="HAMAP" id="MF_01113">
    <property type="entry name" value="DNApol_IV"/>
    <property type="match status" value="1"/>
</dbReference>
<dbReference type="InterPro" id="IPR043502">
    <property type="entry name" value="DNA/RNA_pol_sf"/>
</dbReference>
<dbReference type="InterPro" id="IPR036775">
    <property type="entry name" value="DNA_pol_Y-fam_lit_finger_sf"/>
</dbReference>
<dbReference type="InterPro" id="IPR017961">
    <property type="entry name" value="DNA_pol_Y-fam_little_finger"/>
</dbReference>
<dbReference type="InterPro" id="IPR050116">
    <property type="entry name" value="DNA_polymerase-Y"/>
</dbReference>
<dbReference type="InterPro" id="IPR022880">
    <property type="entry name" value="DNApol_IV"/>
</dbReference>
<dbReference type="InterPro" id="IPR043128">
    <property type="entry name" value="Rev_trsase/Diguanyl_cyclase"/>
</dbReference>
<dbReference type="InterPro" id="IPR001126">
    <property type="entry name" value="UmuC"/>
</dbReference>
<dbReference type="NCBIfam" id="NF002677">
    <property type="entry name" value="PRK02406.1"/>
    <property type="match status" value="1"/>
</dbReference>
<dbReference type="PANTHER" id="PTHR11076:SF33">
    <property type="entry name" value="DNA POLYMERASE KAPPA"/>
    <property type="match status" value="1"/>
</dbReference>
<dbReference type="PANTHER" id="PTHR11076">
    <property type="entry name" value="DNA REPAIR POLYMERASE UMUC / TRANSFERASE FAMILY MEMBER"/>
    <property type="match status" value="1"/>
</dbReference>
<dbReference type="Pfam" id="PF00817">
    <property type="entry name" value="IMS"/>
    <property type="match status" value="1"/>
</dbReference>
<dbReference type="Pfam" id="PF11799">
    <property type="entry name" value="IMS_C"/>
    <property type="match status" value="1"/>
</dbReference>
<dbReference type="SUPFAM" id="SSF56672">
    <property type="entry name" value="DNA/RNA polymerases"/>
    <property type="match status" value="1"/>
</dbReference>
<dbReference type="SUPFAM" id="SSF100879">
    <property type="entry name" value="Lesion bypass DNA polymerase (Y-family), little finger domain"/>
    <property type="match status" value="1"/>
</dbReference>
<dbReference type="PROSITE" id="PS50173">
    <property type="entry name" value="UMUC"/>
    <property type="match status" value="1"/>
</dbReference>